<gene>
    <name evidence="1" type="primary">thyA</name>
    <name type="ordered locus">stu0578</name>
</gene>
<dbReference type="EC" id="2.1.1.45" evidence="1"/>
<dbReference type="EMBL" id="CP000023">
    <property type="protein sequence ID" value="AAV60284.1"/>
    <property type="molecule type" value="Genomic_DNA"/>
</dbReference>
<dbReference type="RefSeq" id="WP_011225670.1">
    <property type="nucleotide sequence ID" value="NC_006448.1"/>
</dbReference>
<dbReference type="SMR" id="Q5M5B3"/>
<dbReference type="STRING" id="264199.stu0578"/>
<dbReference type="KEGG" id="stl:stu0578"/>
<dbReference type="PATRIC" id="fig|264199.4.peg.585"/>
<dbReference type="eggNOG" id="COG0207">
    <property type="taxonomic scope" value="Bacteria"/>
</dbReference>
<dbReference type="HOGENOM" id="CLU_021669_0_0_9"/>
<dbReference type="UniPathway" id="UPA00575"/>
<dbReference type="Proteomes" id="UP000001170">
    <property type="component" value="Chromosome"/>
</dbReference>
<dbReference type="GO" id="GO:0005829">
    <property type="term" value="C:cytosol"/>
    <property type="evidence" value="ECO:0007669"/>
    <property type="project" value="TreeGrafter"/>
</dbReference>
<dbReference type="GO" id="GO:0004799">
    <property type="term" value="F:thymidylate synthase activity"/>
    <property type="evidence" value="ECO:0007669"/>
    <property type="project" value="UniProtKB-UniRule"/>
</dbReference>
<dbReference type="GO" id="GO:0006231">
    <property type="term" value="P:dTMP biosynthetic process"/>
    <property type="evidence" value="ECO:0007669"/>
    <property type="project" value="UniProtKB-UniRule"/>
</dbReference>
<dbReference type="GO" id="GO:0006235">
    <property type="term" value="P:dTTP biosynthetic process"/>
    <property type="evidence" value="ECO:0007669"/>
    <property type="project" value="UniProtKB-UniRule"/>
</dbReference>
<dbReference type="GO" id="GO:0032259">
    <property type="term" value="P:methylation"/>
    <property type="evidence" value="ECO:0007669"/>
    <property type="project" value="UniProtKB-KW"/>
</dbReference>
<dbReference type="CDD" id="cd00351">
    <property type="entry name" value="TS_Pyrimidine_HMase"/>
    <property type="match status" value="1"/>
</dbReference>
<dbReference type="Gene3D" id="3.30.572.10">
    <property type="entry name" value="Thymidylate synthase/dCMP hydroxymethylase domain"/>
    <property type="match status" value="1"/>
</dbReference>
<dbReference type="HAMAP" id="MF_00008">
    <property type="entry name" value="Thymidy_synth_bact"/>
    <property type="match status" value="1"/>
</dbReference>
<dbReference type="InterPro" id="IPR045097">
    <property type="entry name" value="Thymidate_synth/dCMP_Mease"/>
</dbReference>
<dbReference type="InterPro" id="IPR023451">
    <property type="entry name" value="Thymidate_synth/dCMP_Mease_dom"/>
</dbReference>
<dbReference type="InterPro" id="IPR036926">
    <property type="entry name" value="Thymidate_synth/dCMP_Mease_sf"/>
</dbReference>
<dbReference type="InterPro" id="IPR000398">
    <property type="entry name" value="Thymidylate_synthase"/>
</dbReference>
<dbReference type="InterPro" id="IPR020940">
    <property type="entry name" value="Thymidylate_synthase_AS"/>
</dbReference>
<dbReference type="NCBIfam" id="NF002495">
    <property type="entry name" value="PRK01827.1-1"/>
    <property type="match status" value="1"/>
</dbReference>
<dbReference type="PANTHER" id="PTHR11548">
    <property type="entry name" value="THYMIDYLATE SYNTHASE 1"/>
    <property type="match status" value="1"/>
</dbReference>
<dbReference type="PANTHER" id="PTHR11548:SF1">
    <property type="entry name" value="THYMIDYLATE SYNTHASE 1"/>
    <property type="match status" value="1"/>
</dbReference>
<dbReference type="Pfam" id="PF00303">
    <property type="entry name" value="Thymidylat_synt"/>
    <property type="match status" value="1"/>
</dbReference>
<dbReference type="PRINTS" id="PR00108">
    <property type="entry name" value="THYMDSNTHASE"/>
</dbReference>
<dbReference type="SUPFAM" id="SSF55831">
    <property type="entry name" value="Thymidylate synthase/dCMP hydroxymethylase"/>
    <property type="match status" value="1"/>
</dbReference>
<dbReference type="PROSITE" id="PS00091">
    <property type="entry name" value="THYMIDYLATE_SYNTHASE"/>
    <property type="match status" value="1"/>
</dbReference>
<keyword id="KW-0963">Cytoplasm</keyword>
<keyword id="KW-0489">Methyltransferase</keyword>
<keyword id="KW-0545">Nucleotide biosynthesis</keyword>
<keyword id="KW-1185">Reference proteome</keyword>
<keyword id="KW-0808">Transferase</keyword>
<reference key="1">
    <citation type="journal article" date="2004" name="Nat. Biotechnol.">
        <title>Complete sequence and comparative genome analysis of the dairy bacterium Streptococcus thermophilus.</title>
        <authorList>
            <person name="Bolotin A."/>
            <person name="Quinquis B."/>
            <person name="Renault P."/>
            <person name="Sorokin A."/>
            <person name="Ehrlich S.D."/>
            <person name="Kulakauskas S."/>
            <person name="Lapidus A."/>
            <person name="Goltsman E."/>
            <person name="Mazur M."/>
            <person name="Pusch G.D."/>
            <person name="Fonstein M."/>
            <person name="Overbeek R."/>
            <person name="Kyprides N."/>
            <person name="Purnelle B."/>
            <person name="Prozzi D."/>
            <person name="Ngui K."/>
            <person name="Masuy D."/>
            <person name="Hancy F."/>
            <person name="Burteau S."/>
            <person name="Boutry M."/>
            <person name="Delcour J."/>
            <person name="Goffeau A."/>
            <person name="Hols P."/>
        </authorList>
    </citation>
    <scope>NUCLEOTIDE SEQUENCE [LARGE SCALE GENOMIC DNA]</scope>
    <source>
        <strain>ATCC BAA-250 / LMG 18311</strain>
    </source>
</reference>
<proteinExistence type="inferred from homology"/>
<sequence length="286" mass="33356">MTKADTIFKENITKIMEEGVWSEQARPKYKDGTTANSKYITGSFAEYDLSKGEFPITTLRPIAIKSAIKEVFWIYQDQTNSLDVLEDKYNVHYWNDWEVEGVPANNGDKRSIGQRYGAVVKKHDIINRLLAQLEANPWNRRNVISLWDYEAFEETAGLQPCAFQTMFDVRRVGEDVYLDGTLTQRSNDMLVAHHINAMQYVALQMMIAKHFGWKVGKFFYFINNLHIYDNQFEQAEELLKRQPSDCQPRLVLNVPDETNFFDIKPEDFELVDYDPVKPQLKFDLAI</sequence>
<comment type="function">
    <text evidence="1">Catalyzes the reductive methylation of 2'-deoxyuridine-5'-monophosphate (dUMP) to 2'-deoxythymidine-5'-monophosphate (dTMP) while utilizing 5,10-methylenetetrahydrofolate (mTHF) as the methyl donor and reductant in the reaction, yielding dihydrofolate (DHF) as a by-product. This enzymatic reaction provides an intracellular de novo source of dTMP, an essential precursor for DNA biosynthesis.</text>
</comment>
<comment type="catalytic activity">
    <reaction evidence="1">
        <text>dUMP + (6R)-5,10-methylene-5,6,7,8-tetrahydrofolate = 7,8-dihydrofolate + dTMP</text>
        <dbReference type="Rhea" id="RHEA:12104"/>
        <dbReference type="ChEBI" id="CHEBI:15636"/>
        <dbReference type="ChEBI" id="CHEBI:57451"/>
        <dbReference type="ChEBI" id="CHEBI:63528"/>
        <dbReference type="ChEBI" id="CHEBI:246422"/>
        <dbReference type="EC" id="2.1.1.45"/>
    </reaction>
</comment>
<comment type="pathway">
    <text evidence="1">Pyrimidine metabolism; dTTP biosynthesis.</text>
</comment>
<comment type="subunit">
    <text evidence="1">Homodimer.</text>
</comment>
<comment type="subcellular location">
    <subcellularLocation>
        <location evidence="1">Cytoplasm</location>
    </subcellularLocation>
</comment>
<comment type="similarity">
    <text evidence="1">Belongs to the thymidylate synthase family. Bacterial-type ThyA subfamily.</text>
</comment>
<accession>Q5M5B3</accession>
<organism>
    <name type="scientific">Streptococcus thermophilus (strain ATCC BAA-250 / LMG 18311)</name>
    <dbReference type="NCBI Taxonomy" id="264199"/>
    <lineage>
        <taxon>Bacteria</taxon>
        <taxon>Bacillati</taxon>
        <taxon>Bacillota</taxon>
        <taxon>Bacilli</taxon>
        <taxon>Lactobacillales</taxon>
        <taxon>Streptococcaceae</taxon>
        <taxon>Streptococcus</taxon>
    </lineage>
</organism>
<feature type="chain" id="PRO_0000141037" description="Thymidylate synthase">
    <location>
        <begin position="1"/>
        <end position="286"/>
    </location>
</feature>
<feature type="active site" description="Nucleophile" evidence="1">
    <location>
        <position position="161"/>
    </location>
</feature>
<feature type="binding site" evidence="1">
    <location>
        <begin position="140"/>
        <end position="141"/>
    </location>
    <ligand>
        <name>dUMP</name>
        <dbReference type="ChEBI" id="CHEBI:246422"/>
        <note>ligand shared between dimeric partners</note>
    </ligand>
</feature>
<feature type="binding site" description="in other chain" evidence="1">
    <location>
        <begin position="185"/>
        <end position="188"/>
    </location>
    <ligand>
        <name>dUMP</name>
        <dbReference type="ChEBI" id="CHEBI:246422"/>
        <note>ligand shared between dimeric partners</note>
    </ligand>
</feature>
<feature type="binding site" evidence="1">
    <location>
        <position position="188"/>
    </location>
    <ligand>
        <name>(6R)-5,10-methylene-5,6,7,8-tetrahydrofolate</name>
        <dbReference type="ChEBI" id="CHEBI:15636"/>
    </ligand>
</feature>
<feature type="binding site" description="in other chain" evidence="1">
    <location>
        <position position="196"/>
    </location>
    <ligand>
        <name>dUMP</name>
        <dbReference type="ChEBI" id="CHEBI:246422"/>
        <note>ligand shared between dimeric partners</note>
    </ligand>
</feature>
<feature type="binding site" description="in other chain" evidence="1">
    <location>
        <begin position="226"/>
        <end position="228"/>
    </location>
    <ligand>
        <name>dUMP</name>
        <dbReference type="ChEBI" id="CHEBI:246422"/>
        <note>ligand shared between dimeric partners</note>
    </ligand>
</feature>
<feature type="binding site" evidence="1">
    <location>
        <position position="285"/>
    </location>
    <ligand>
        <name>(6R)-5,10-methylene-5,6,7,8-tetrahydrofolate</name>
        <dbReference type="ChEBI" id="CHEBI:15636"/>
    </ligand>
</feature>
<name>TYSY_STRT2</name>
<evidence type="ECO:0000255" key="1">
    <source>
        <dbReference type="HAMAP-Rule" id="MF_00008"/>
    </source>
</evidence>
<protein>
    <recommendedName>
        <fullName evidence="1">Thymidylate synthase</fullName>
        <shortName evidence="1">TS</shortName>
        <shortName evidence="1">TSase</shortName>
        <ecNumber evidence="1">2.1.1.45</ecNumber>
    </recommendedName>
</protein>